<protein>
    <recommendedName>
        <fullName>Protein LicA</fullName>
    </recommendedName>
</protein>
<reference key="1">
    <citation type="journal article" date="1989" name="Cell">
        <title>The molecular mechanism of phase variation of H. influenzae lipopolysaccharide.</title>
        <authorList>
            <person name="Weiser J.N."/>
            <person name="Love J.M."/>
            <person name="Moxon E.R."/>
        </authorList>
    </citation>
    <scope>NUCLEOTIDE SEQUENCE [GENOMIC DNA]</scope>
    <source>
        <strain>RM 7004 / Serotype B</strain>
    </source>
</reference>
<reference key="2">
    <citation type="journal article" date="1996" name="Mol. Microbiol.">
        <title>Tandem repeats of the tetramer 5'-CAAT-3' present in lic2A are required for phase variation but not lipopolysaccharide biosynthesis in Haemophilus influenzae.</title>
        <authorList>
            <person name="High N.J."/>
            <person name="Jennings M.P."/>
            <person name="Moxon E.R."/>
        </authorList>
    </citation>
    <scope>EXTENT OF VARIATION IN REPEAT NUMBERS</scope>
    <source>
        <strain>26 strains</strain>
        <strain>RM 7004 / Serotype B</strain>
    </source>
</reference>
<feature type="chain" id="PRO_0000171452" description="Protein LicA">
    <location>
        <begin position="1"/>
        <end position="339"/>
    </location>
</feature>
<feature type="repeat" description="1" evidence="1">
    <location>
        <begin position="4"/>
        <end position="7"/>
    </location>
</feature>
<feature type="repeat" description="2" evidence="1">
    <location>
        <begin position="8"/>
        <end position="11"/>
    </location>
</feature>
<feature type="repeat" description="3" evidence="1">
    <location>
        <begin position="12"/>
        <end position="15"/>
    </location>
</feature>
<feature type="repeat" description="4" evidence="1">
    <location>
        <begin position="16"/>
        <end position="19"/>
    </location>
</feature>
<feature type="repeat" description="5" evidence="1">
    <location>
        <begin position="20"/>
        <end position="23"/>
    </location>
</feature>
<feature type="repeat" description="6" evidence="1">
    <location>
        <begin position="24"/>
        <end position="27"/>
    </location>
</feature>
<feature type="repeat" description="7" evidence="1">
    <location>
        <begin position="28"/>
        <end position="31"/>
    </location>
</feature>
<feature type="repeat" description="8" evidence="1">
    <location>
        <begin position="32"/>
        <end position="35"/>
    </location>
</feature>
<feature type="repeat" description="9" evidence="1">
    <location>
        <begin position="36"/>
        <end position="39"/>
    </location>
</feature>
<feature type="region of interest" description="9 X 4 AA tandem repeats of I-N-Q-S">
    <location>
        <begin position="4"/>
        <end position="39"/>
    </location>
</feature>
<feature type="sequence variant" description="- phenotype.">
    <original>MQS</original>
    <variation>IQKCYA</variation>
    <location>
        <begin position="1"/>
        <end position="3"/>
    </location>
</feature>
<feature type="sequence variant" description="++++ phenotype.">
    <original>M</original>
    <variation>MNTKMLCN</variation>
    <location>
        <position position="1"/>
    </location>
</feature>
<accession>P14181</accession>
<sequence length="339" mass="39466">MQSINQSINQSINQSINQSINQSINQSINQSINQSINQSINQIVGFVKTCYKPEEVFHFLHQHSIPFSSIGGMTNQNVLLNISGVKFVLRIPNAVNLSLINREYEAFNNAQAYRAGLNVETPVLDAKSGVKLTRYLENSNTLSQIQLNEQSCLSQVVNNLYRLHNSEFVFRNVFSVFDEFRQYFSLLENKSAFYQADSRMDKLSAVFWQFEEINKDIILRPCHNDLVPENMLLQDDRLFFIDWEYSGLNDPLFDIATIIEEAHLSKEAADFLLETYCNQTNKYHKTEFQIAHKRLKIHRFCQNVLWFLWTKVKEEHGENFGDYALKRLDAAFKLLEELP</sequence>
<gene>
    <name type="primary">licA</name>
    <name type="synonym">lic1A</name>
</gene>
<keyword id="KW-0677">Repeat</keyword>
<comment type="function">
    <text>Mediates phase variation of the LOS 6A2 and 12D9 epitopes. Phase variation of H.influenza LOS epitopes expressed by LicA is determined by a translational switch.</text>
</comment>
<comment type="domain">
    <text>Between 2 and 19 copies of the INQS repeats are to be found in different strains; these are thought to serve to generate phase-variable expression of this gene.</text>
</comment>
<comment type="miscellaneous">
    <text>There is spontaneous, high frequency switching between three discrete levels of expression (++++, +, -) of oligosaccharide epitopes.</text>
</comment>
<comment type="miscellaneous">
    <text>Lipooligosaccharide (LOS) is a glycolipid that is a necessary component and antigenic determinant of the outer membrane and has been shown to be an important factor in the host-parasite interaction in a number of Gram-negative species.</text>
</comment>
<comment type="miscellaneous">
    <text>H.influenzae is able to display an extensive repertoire of different surface configurations through variability of its LOS.</text>
</comment>
<comment type="similarity">
    <text evidence="2">Belongs to the peptidase S49 family.</text>
</comment>
<organism>
    <name type="scientific">Haemophilus influenzae</name>
    <dbReference type="NCBI Taxonomy" id="727"/>
    <lineage>
        <taxon>Bacteria</taxon>
        <taxon>Pseudomonadati</taxon>
        <taxon>Pseudomonadota</taxon>
        <taxon>Gammaproteobacteria</taxon>
        <taxon>Pasteurellales</taxon>
        <taxon>Pasteurellaceae</taxon>
        <taxon>Haemophilus</taxon>
    </lineage>
</organism>
<name>LICA2_HAEIF</name>
<dbReference type="EMBL" id="M27280">
    <property type="protein sequence ID" value="AAA24971.1"/>
    <property type="molecule type" value="Genomic_DNA"/>
</dbReference>
<dbReference type="PIR" id="A33465">
    <property type="entry name" value="A33465"/>
</dbReference>
<dbReference type="RefSeq" id="WP_112080856.1">
    <property type="nucleotide sequence ID" value="NZ_UEXC01000004.1"/>
</dbReference>
<dbReference type="SMR" id="P14181"/>
<dbReference type="BRENDA" id="2.7.1.32">
    <property type="organism ID" value="2529"/>
</dbReference>
<dbReference type="CDD" id="cd05151">
    <property type="entry name" value="ChoK-like"/>
    <property type="match status" value="1"/>
</dbReference>
<dbReference type="Gene3D" id="3.90.1200.10">
    <property type="match status" value="1"/>
</dbReference>
<dbReference type="Gene3D" id="3.30.200.20">
    <property type="entry name" value="Phosphorylase Kinase, domain 1"/>
    <property type="match status" value="1"/>
</dbReference>
<dbReference type="InterPro" id="IPR052077">
    <property type="entry name" value="CcrZ_PhaseVar_Mediator"/>
</dbReference>
<dbReference type="InterPro" id="IPR011009">
    <property type="entry name" value="Kinase-like_dom_sf"/>
</dbReference>
<dbReference type="PANTHER" id="PTHR40086:SF1">
    <property type="entry name" value="CELL CYCLE REGULATOR CCRZ"/>
    <property type="match status" value="1"/>
</dbReference>
<dbReference type="PANTHER" id="PTHR40086">
    <property type="entry name" value="PHOSPHOTRANSFERASE YTMP-RELATED"/>
    <property type="match status" value="1"/>
</dbReference>
<dbReference type="Pfam" id="PF01633">
    <property type="entry name" value="Choline_kinase"/>
    <property type="match status" value="1"/>
</dbReference>
<dbReference type="SUPFAM" id="SSF56112">
    <property type="entry name" value="Protein kinase-like (PK-like)"/>
    <property type="match status" value="1"/>
</dbReference>
<evidence type="ECO:0000269" key="1">
    <source>
    </source>
</evidence>
<evidence type="ECO:0000305" key="2"/>
<proteinExistence type="inferred from homology"/>